<comment type="function">
    <text evidence="1">Catalyzes the ATP-dependent conversion of 7-carboxy-7-deazaguanine (CDG) to 7-cyano-7-deazaguanine (preQ(0)).</text>
</comment>
<comment type="catalytic activity">
    <reaction evidence="1">
        <text>7-carboxy-7-deazaguanine + NH4(+) + ATP = 7-cyano-7-deazaguanine + ADP + phosphate + H2O + H(+)</text>
        <dbReference type="Rhea" id="RHEA:27982"/>
        <dbReference type="ChEBI" id="CHEBI:15377"/>
        <dbReference type="ChEBI" id="CHEBI:15378"/>
        <dbReference type="ChEBI" id="CHEBI:28938"/>
        <dbReference type="ChEBI" id="CHEBI:30616"/>
        <dbReference type="ChEBI" id="CHEBI:43474"/>
        <dbReference type="ChEBI" id="CHEBI:45075"/>
        <dbReference type="ChEBI" id="CHEBI:61036"/>
        <dbReference type="ChEBI" id="CHEBI:456216"/>
        <dbReference type="EC" id="6.3.4.20"/>
    </reaction>
</comment>
<comment type="cofactor">
    <cofactor evidence="1">
        <name>Zn(2+)</name>
        <dbReference type="ChEBI" id="CHEBI:29105"/>
    </cofactor>
    <text evidence="1">Binds 1 zinc ion per subunit.</text>
</comment>
<comment type="pathway">
    <text evidence="1">Purine metabolism; 7-cyano-7-deazaguanine biosynthesis.</text>
</comment>
<comment type="subunit">
    <text evidence="1">Homodimer.</text>
</comment>
<comment type="similarity">
    <text evidence="1">Belongs to the QueC family.</text>
</comment>
<accession>A4J5C7</accession>
<gene>
    <name evidence="1" type="primary">queC</name>
    <name type="ordered locus">Dred_1755</name>
</gene>
<dbReference type="EC" id="6.3.4.20" evidence="1"/>
<dbReference type="EMBL" id="CP000612">
    <property type="protein sequence ID" value="ABO50280.1"/>
    <property type="molecule type" value="Genomic_DNA"/>
</dbReference>
<dbReference type="RefSeq" id="WP_011878094.1">
    <property type="nucleotide sequence ID" value="NC_009253.1"/>
</dbReference>
<dbReference type="SMR" id="A4J5C7"/>
<dbReference type="STRING" id="349161.Dred_1755"/>
<dbReference type="KEGG" id="drm:Dred_1755"/>
<dbReference type="eggNOG" id="COG0603">
    <property type="taxonomic scope" value="Bacteria"/>
</dbReference>
<dbReference type="HOGENOM" id="CLU_081854_1_0_9"/>
<dbReference type="OrthoDB" id="9789567at2"/>
<dbReference type="UniPathway" id="UPA00391"/>
<dbReference type="Proteomes" id="UP000001556">
    <property type="component" value="Chromosome"/>
</dbReference>
<dbReference type="GO" id="GO:0005524">
    <property type="term" value="F:ATP binding"/>
    <property type="evidence" value="ECO:0007669"/>
    <property type="project" value="UniProtKB-UniRule"/>
</dbReference>
<dbReference type="GO" id="GO:0016879">
    <property type="term" value="F:ligase activity, forming carbon-nitrogen bonds"/>
    <property type="evidence" value="ECO:0007669"/>
    <property type="project" value="UniProtKB-UniRule"/>
</dbReference>
<dbReference type="GO" id="GO:0008270">
    <property type="term" value="F:zinc ion binding"/>
    <property type="evidence" value="ECO:0007669"/>
    <property type="project" value="UniProtKB-UniRule"/>
</dbReference>
<dbReference type="GO" id="GO:0008616">
    <property type="term" value="P:queuosine biosynthetic process"/>
    <property type="evidence" value="ECO:0007669"/>
    <property type="project" value="UniProtKB-UniRule"/>
</dbReference>
<dbReference type="CDD" id="cd01995">
    <property type="entry name" value="QueC-like"/>
    <property type="match status" value="1"/>
</dbReference>
<dbReference type="Gene3D" id="3.40.50.620">
    <property type="entry name" value="HUPs"/>
    <property type="match status" value="1"/>
</dbReference>
<dbReference type="HAMAP" id="MF_01633">
    <property type="entry name" value="QueC"/>
    <property type="match status" value="1"/>
</dbReference>
<dbReference type="InterPro" id="IPR018317">
    <property type="entry name" value="QueC"/>
</dbReference>
<dbReference type="InterPro" id="IPR014729">
    <property type="entry name" value="Rossmann-like_a/b/a_fold"/>
</dbReference>
<dbReference type="NCBIfam" id="TIGR00364">
    <property type="entry name" value="7-cyano-7-deazaguanine synthase QueC"/>
    <property type="match status" value="1"/>
</dbReference>
<dbReference type="PANTHER" id="PTHR42914">
    <property type="entry name" value="7-CYANO-7-DEAZAGUANINE SYNTHASE"/>
    <property type="match status" value="1"/>
</dbReference>
<dbReference type="PANTHER" id="PTHR42914:SF1">
    <property type="entry name" value="7-CYANO-7-DEAZAGUANINE SYNTHASE"/>
    <property type="match status" value="1"/>
</dbReference>
<dbReference type="Pfam" id="PF06508">
    <property type="entry name" value="QueC"/>
    <property type="match status" value="1"/>
</dbReference>
<dbReference type="PIRSF" id="PIRSF006293">
    <property type="entry name" value="ExsB"/>
    <property type="match status" value="1"/>
</dbReference>
<dbReference type="SUPFAM" id="SSF52402">
    <property type="entry name" value="Adenine nucleotide alpha hydrolases-like"/>
    <property type="match status" value="1"/>
</dbReference>
<feature type="chain" id="PRO_1000073651" description="7-cyano-7-deazaguanine synthase">
    <location>
        <begin position="1"/>
        <end position="228"/>
    </location>
</feature>
<feature type="binding site" evidence="1">
    <location>
        <begin position="7"/>
        <end position="17"/>
    </location>
    <ligand>
        <name>ATP</name>
        <dbReference type="ChEBI" id="CHEBI:30616"/>
    </ligand>
</feature>
<feature type="binding site" evidence="1">
    <location>
        <position position="192"/>
    </location>
    <ligand>
        <name>Zn(2+)</name>
        <dbReference type="ChEBI" id="CHEBI:29105"/>
    </ligand>
</feature>
<feature type="binding site" evidence="1">
    <location>
        <position position="200"/>
    </location>
    <ligand>
        <name>Zn(2+)</name>
        <dbReference type="ChEBI" id="CHEBI:29105"/>
    </ligand>
</feature>
<feature type="binding site" evidence="1">
    <location>
        <position position="203"/>
    </location>
    <ligand>
        <name>Zn(2+)</name>
        <dbReference type="ChEBI" id="CHEBI:29105"/>
    </ligand>
</feature>
<feature type="binding site" evidence="1">
    <location>
        <position position="206"/>
    </location>
    <ligand>
        <name>Zn(2+)</name>
        <dbReference type="ChEBI" id="CHEBI:29105"/>
    </ligand>
</feature>
<reference key="1">
    <citation type="submission" date="2007-03" db="EMBL/GenBank/DDBJ databases">
        <title>Complete sequence of Desulfotomaculum reducens MI-1.</title>
        <authorList>
            <consortium name="US DOE Joint Genome Institute"/>
            <person name="Copeland A."/>
            <person name="Lucas S."/>
            <person name="Lapidus A."/>
            <person name="Barry K."/>
            <person name="Detter J.C."/>
            <person name="Glavina del Rio T."/>
            <person name="Hammon N."/>
            <person name="Israni S."/>
            <person name="Dalin E."/>
            <person name="Tice H."/>
            <person name="Pitluck S."/>
            <person name="Sims D."/>
            <person name="Brettin T."/>
            <person name="Bruce D."/>
            <person name="Han C."/>
            <person name="Tapia R."/>
            <person name="Schmutz J."/>
            <person name="Larimer F."/>
            <person name="Land M."/>
            <person name="Hauser L."/>
            <person name="Kyrpides N."/>
            <person name="Kim E."/>
            <person name="Tebo B.M."/>
            <person name="Richardson P."/>
        </authorList>
    </citation>
    <scope>NUCLEOTIDE SEQUENCE [LARGE SCALE GENOMIC DNA]</scope>
    <source>
        <strain>ATCC BAA-1160 / DSM 100696 / MI-1</strain>
    </source>
</reference>
<evidence type="ECO:0000255" key="1">
    <source>
        <dbReference type="HAMAP-Rule" id="MF_01633"/>
    </source>
</evidence>
<keyword id="KW-0067">ATP-binding</keyword>
<keyword id="KW-0436">Ligase</keyword>
<keyword id="KW-0479">Metal-binding</keyword>
<keyword id="KW-0547">Nucleotide-binding</keyword>
<keyword id="KW-0671">Queuosine biosynthesis</keyword>
<keyword id="KW-1185">Reference proteome</keyword>
<keyword id="KW-0862">Zinc</keyword>
<organism>
    <name type="scientific">Desulforamulus reducens (strain ATCC BAA-1160 / DSM 100696 / MI-1)</name>
    <name type="common">Desulfotomaculum reducens</name>
    <dbReference type="NCBI Taxonomy" id="349161"/>
    <lineage>
        <taxon>Bacteria</taxon>
        <taxon>Bacillati</taxon>
        <taxon>Bacillota</taxon>
        <taxon>Clostridia</taxon>
        <taxon>Eubacteriales</taxon>
        <taxon>Peptococcaceae</taxon>
        <taxon>Desulforamulus</taxon>
    </lineage>
</organism>
<sequence>MNSVVLLSGGLDSAVNLAFARTEGNVKLALTINYRQRAAHKEIAAAAQLARYYAIPHRVIELPWLAEITKTALVRSESQLPEPKTEELDQLELAGKTAAEVWVPNRNGLFVNIAACFAETLHCEIVVAGFNCEEAATFPDNTPEFALAASAAMQYSTANQVKVLSYTGRLNKKDIVALGQRLQLPWELIWSCYRGEALMCGKCESCQRMIRAFHSLGLNLPQNFLMTE</sequence>
<protein>
    <recommendedName>
        <fullName evidence="1">7-cyano-7-deazaguanine synthase</fullName>
        <ecNumber evidence="1">6.3.4.20</ecNumber>
    </recommendedName>
    <alternativeName>
        <fullName evidence="1">7-cyano-7-carbaguanine synthase</fullName>
    </alternativeName>
    <alternativeName>
        <fullName evidence="1">PreQ(0) synthase</fullName>
    </alternativeName>
    <alternativeName>
        <fullName evidence="1">Queuosine biosynthesis protein QueC</fullName>
    </alternativeName>
</protein>
<proteinExistence type="inferred from homology"/>
<name>QUEC_DESRM</name>